<accession>Q9VXK0</accession>
<accession>A4V4K8</accession>
<accession>Q9U5W0</accession>
<sequence length="273" mass="31965">MLKLRNLLAVGKSNNNAVRSLSTTPSRNDSESWFSKLLVRKIEPTKESHSRMLSDKEIIYALHTHNVRPDSMGSYLNNYKTTVALINEKKANLSCELVASWTVQVGDMDQCLHLWKYTGGFEKIDQAKEDLWNDPEYLSLMQERSKFLRSRHLQYLLAFSYWPQIASRTGKNIYEMRSYRLTPGTMIEWGNNWARAINYRKHNNEAFAGFFSQIGRLYNVHHIWCYKSLQDRKETREAAWRSPGWDECVAYTVPLIREMHCRVLAPTEFSPSQ</sequence>
<organism>
    <name type="scientific">Drosophila melanogaster</name>
    <name type="common">Fruit fly</name>
    <dbReference type="NCBI Taxonomy" id="7227"/>
    <lineage>
        <taxon>Eukaryota</taxon>
        <taxon>Metazoa</taxon>
        <taxon>Ecdysozoa</taxon>
        <taxon>Arthropoda</taxon>
        <taxon>Hexapoda</taxon>
        <taxon>Insecta</taxon>
        <taxon>Pterygota</taxon>
        <taxon>Neoptera</taxon>
        <taxon>Endopterygota</taxon>
        <taxon>Diptera</taxon>
        <taxon>Brachycera</taxon>
        <taxon>Muscomorpha</taxon>
        <taxon>Ephydroidea</taxon>
        <taxon>Drosophilidae</taxon>
        <taxon>Drosophila</taxon>
        <taxon>Sophophora</taxon>
    </lineage>
</organism>
<protein>
    <recommendedName>
        <fullName>Protein NipSnap</fullName>
    </recommendedName>
</protein>
<keyword id="KW-1185">Reference proteome</keyword>
<reference key="1">
    <citation type="journal article" date="2000" name="Science">
        <title>The genome sequence of Drosophila melanogaster.</title>
        <authorList>
            <person name="Adams M.D."/>
            <person name="Celniker S.E."/>
            <person name="Holt R.A."/>
            <person name="Evans C.A."/>
            <person name="Gocayne J.D."/>
            <person name="Amanatides P.G."/>
            <person name="Scherer S.E."/>
            <person name="Li P.W."/>
            <person name="Hoskins R.A."/>
            <person name="Galle R.F."/>
            <person name="George R.A."/>
            <person name="Lewis S.E."/>
            <person name="Richards S."/>
            <person name="Ashburner M."/>
            <person name="Henderson S.N."/>
            <person name="Sutton G.G."/>
            <person name="Wortman J.R."/>
            <person name="Yandell M.D."/>
            <person name="Zhang Q."/>
            <person name="Chen L.X."/>
            <person name="Brandon R.C."/>
            <person name="Rogers Y.-H.C."/>
            <person name="Blazej R.G."/>
            <person name="Champe M."/>
            <person name="Pfeiffer B.D."/>
            <person name="Wan K.H."/>
            <person name="Doyle C."/>
            <person name="Baxter E.G."/>
            <person name="Helt G."/>
            <person name="Nelson C.R."/>
            <person name="Miklos G.L.G."/>
            <person name="Abril J.F."/>
            <person name="Agbayani A."/>
            <person name="An H.-J."/>
            <person name="Andrews-Pfannkoch C."/>
            <person name="Baldwin D."/>
            <person name="Ballew R.M."/>
            <person name="Basu A."/>
            <person name="Baxendale J."/>
            <person name="Bayraktaroglu L."/>
            <person name="Beasley E.M."/>
            <person name="Beeson K.Y."/>
            <person name="Benos P.V."/>
            <person name="Berman B.P."/>
            <person name="Bhandari D."/>
            <person name="Bolshakov S."/>
            <person name="Borkova D."/>
            <person name="Botchan M.R."/>
            <person name="Bouck J."/>
            <person name="Brokstein P."/>
            <person name="Brottier P."/>
            <person name="Burtis K.C."/>
            <person name="Busam D.A."/>
            <person name="Butler H."/>
            <person name="Cadieu E."/>
            <person name="Center A."/>
            <person name="Chandra I."/>
            <person name="Cherry J.M."/>
            <person name="Cawley S."/>
            <person name="Dahlke C."/>
            <person name="Davenport L.B."/>
            <person name="Davies P."/>
            <person name="de Pablos B."/>
            <person name="Delcher A."/>
            <person name="Deng Z."/>
            <person name="Mays A.D."/>
            <person name="Dew I."/>
            <person name="Dietz S.M."/>
            <person name="Dodson K."/>
            <person name="Doup L.E."/>
            <person name="Downes M."/>
            <person name="Dugan-Rocha S."/>
            <person name="Dunkov B.C."/>
            <person name="Dunn P."/>
            <person name="Durbin K.J."/>
            <person name="Evangelista C.C."/>
            <person name="Ferraz C."/>
            <person name="Ferriera S."/>
            <person name="Fleischmann W."/>
            <person name="Fosler C."/>
            <person name="Gabrielian A.E."/>
            <person name="Garg N.S."/>
            <person name="Gelbart W.M."/>
            <person name="Glasser K."/>
            <person name="Glodek A."/>
            <person name="Gong F."/>
            <person name="Gorrell J.H."/>
            <person name="Gu Z."/>
            <person name="Guan P."/>
            <person name="Harris M."/>
            <person name="Harris N.L."/>
            <person name="Harvey D.A."/>
            <person name="Heiman T.J."/>
            <person name="Hernandez J.R."/>
            <person name="Houck J."/>
            <person name="Hostin D."/>
            <person name="Houston K.A."/>
            <person name="Howland T.J."/>
            <person name="Wei M.-H."/>
            <person name="Ibegwam C."/>
            <person name="Jalali M."/>
            <person name="Kalush F."/>
            <person name="Karpen G.H."/>
            <person name="Ke Z."/>
            <person name="Kennison J.A."/>
            <person name="Ketchum K.A."/>
            <person name="Kimmel B.E."/>
            <person name="Kodira C.D."/>
            <person name="Kraft C.L."/>
            <person name="Kravitz S."/>
            <person name="Kulp D."/>
            <person name="Lai Z."/>
            <person name="Lasko P."/>
            <person name="Lei Y."/>
            <person name="Levitsky A.A."/>
            <person name="Li J.H."/>
            <person name="Li Z."/>
            <person name="Liang Y."/>
            <person name="Lin X."/>
            <person name="Liu X."/>
            <person name="Mattei B."/>
            <person name="McIntosh T.C."/>
            <person name="McLeod M.P."/>
            <person name="McPherson D."/>
            <person name="Merkulov G."/>
            <person name="Milshina N.V."/>
            <person name="Mobarry C."/>
            <person name="Morris J."/>
            <person name="Moshrefi A."/>
            <person name="Mount S.M."/>
            <person name="Moy M."/>
            <person name="Murphy B."/>
            <person name="Murphy L."/>
            <person name="Muzny D.M."/>
            <person name="Nelson D.L."/>
            <person name="Nelson D.R."/>
            <person name="Nelson K.A."/>
            <person name="Nixon K."/>
            <person name="Nusskern D.R."/>
            <person name="Pacleb J.M."/>
            <person name="Palazzolo M."/>
            <person name="Pittman G.S."/>
            <person name="Pan S."/>
            <person name="Pollard J."/>
            <person name="Puri V."/>
            <person name="Reese M.G."/>
            <person name="Reinert K."/>
            <person name="Remington K."/>
            <person name="Saunders R.D.C."/>
            <person name="Scheeler F."/>
            <person name="Shen H."/>
            <person name="Shue B.C."/>
            <person name="Siden-Kiamos I."/>
            <person name="Simpson M."/>
            <person name="Skupski M.P."/>
            <person name="Smith T.J."/>
            <person name="Spier E."/>
            <person name="Spradling A.C."/>
            <person name="Stapleton M."/>
            <person name="Strong R."/>
            <person name="Sun E."/>
            <person name="Svirskas R."/>
            <person name="Tector C."/>
            <person name="Turner R."/>
            <person name="Venter E."/>
            <person name="Wang A.H."/>
            <person name="Wang X."/>
            <person name="Wang Z.-Y."/>
            <person name="Wassarman D.A."/>
            <person name="Weinstock G.M."/>
            <person name="Weissenbach J."/>
            <person name="Williams S.M."/>
            <person name="Woodage T."/>
            <person name="Worley K.C."/>
            <person name="Wu D."/>
            <person name="Yang S."/>
            <person name="Yao Q.A."/>
            <person name="Ye J."/>
            <person name="Yeh R.-F."/>
            <person name="Zaveri J.S."/>
            <person name="Zhan M."/>
            <person name="Zhang G."/>
            <person name="Zhao Q."/>
            <person name="Zheng L."/>
            <person name="Zheng X.H."/>
            <person name="Zhong F.N."/>
            <person name="Zhong W."/>
            <person name="Zhou X."/>
            <person name="Zhu S.C."/>
            <person name="Zhu X."/>
            <person name="Smith H.O."/>
            <person name="Gibbs R.A."/>
            <person name="Myers E.W."/>
            <person name="Rubin G.M."/>
            <person name="Venter J.C."/>
        </authorList>
    </citation>
    <scope>NUCLEOTIDE SEQUENCE [LARGE SCALE GENOMIC DNA]</scope>
    <source>
        <strain>Berkeley</strain>
    </source>
</reference>
<reference key="2">
    <citation type="journal article" date="2002" name="Genome Biol.">
        <title>Annotation of the Drosophila melanogaster euchromatic genome: a systematic review.</title>
        <authorList>
            <person name="Misra S."/>
            <person name="Crosby M.A."/>
            <person name="Mungall C.J."/>
            <person name="Matthews B.B."/>
            <person name="Campbell K.S."/>
            <person name="Hradecky P."/>
            <person name="Huang Y."/>
            <person name="Kaminker J.S."/>
            <person name="Millburn G.H."/>
            <person name="Prochnik S.E."/>
            <person name="Smith C.D."/>
            <person name="Tupy J.L."/>
            <person name="Whitfield E.J."/>
            <person name="Bayraktaroglu L."/>
            <person name="Berman B.P."/>
            <person name="Bettencourt B.R."/>
            <person name="Celniker S.E."/>
            <person name="de Grey A.D.N.J."/>
            <person name="Drysdale R.A."/>
            <person name="Harris N.L."/>
            <person name="Richter J."/>
            <person name="Russo S."/>
            <person name="Schroeder A.J."/>
            <person name="Shu S.Q."/>
            <person name="Stapleton M."/>
            <person name="Yamada C."/>
            <person name="Ashburner M."/>
            <person name="Gelbart W.M."/>
            <person name="Rubin G.M."/>
            <person name="Lewis S.E."/>
        </authorList>
    </citation>
    <scope>GENOME REANNOTATION</scope>
    <source>
        <strain>Berkeley</strain>
    </source>
</reference>
<reference key="3">
    <citation type="journal article" date="2002" name="Genome Biol.">
        <title>A Drosophila full-length cDNA resource.</title>
        <authorList>
            <person name="Stapleton M."/>
            <person name="Carlson J.W."/>
            <person name="Brokstein P."/>
            <person name="Yu C."/>
            <person name="Champe M."/>
            <person name="George R.A."/>
            <person name="Guarin H."/>
            <person name="Kronmiller B."/>
            <person name="Pacleb J.M."/>
            <person name="Park S."/>
            <person name="Wan K.H."/>
            <person name="Rubin G.M."/>
            <person name="Celniker S.E."/>
        </authorList>
    </citation>
    <scope>NUCLEOTIDE SEQUENCE [LARGE SCALE MRNA]</scope>
    <source>
        <strain>Berkeley</strain>
        <tissue>Embryo</tissue>
    </source>
</reference>
<reference key="4">
    <citation type="submission" date="1999-09" db="EMBL/GenBank/DDBJ databases">
        <title>Cloning of NIPSNAP gene orthologues in Danio rerio and Drosophila melanogaster.</title>
        <authorList>
            <person name="Kedra D."/>
            <person name="Dumanski J.P."/>
        </authorList>
    </citation>
    <scope>NUCLEOTIDE SEQUENCE [MRNA] OF 1-193</scope>
</reference>
<comment type="similarity">
    <text evidence="1">Belongs to the NipSnap family.</text>
</comment>
<name>NIPSN_DROME</name>
<proteinExistence type="evidence at transcript level"/>
<dbReference type="EMBL" id="AE014298">
    <property type="protein sequence ID" value="AAF48562.2"/>
    <property type="molecule type" value="Genomic_DNA"/>
</dbReference>
<dbReference type="EMBL" id="AE014298">
    <property type="protein sequence ID" value="AAN09383.1"/>
    <property type="molecule type" value="Genomic_DNA"/>
</dbReference>
<dbReference type="EMBL" id="AE014298">
    <property type="protein sequence ID" value="AAN09384.1"/>
    <property type="molecule type" value="Genomic_DNA"/>
</dbReference>
<dbReference type="EMBL" id="AY061048">
    <property type="protein sequence ID" value="AAL28596.1"/>
    <property type="molecule type" value="mRNA"/>
</dbReference>
<dbReference type="EMBL" id="AJ249798">
    <property type="protein sequence ID" value="CAB56699.1"/>
    <property type="molecule type" value="mRNA"/>
</dbReference>
<dbReference type="RefSeq" id="NP_001285316.1">
    <property type="nucleotide sequence ID" value="NM_001298387.1"/>
</dbReference>
<dbReference type="RefSeq" id="NP_573103.1">
    <property type="nucleotide sequence ID" value="NM_132875.4"/>
</dbReference>
<dbReference type="RefSeq" id="NP_727931.1">
    <property type="nucleotide sequence ID" value="NM_167483.3"/>
</dbReference>
<dbReference type="RefSeq" id="NP_727932.1">
    <property type="nucleotide sequence ID" value="NM_167484.3"/>
</dbReference>
<dbReference type="SMR" id="Q9VXK0"/>
<dbReference type="BioGRID" id="58917">
    <property type="interactions" value="9"/>
</dbReference>
<dbReference type="DIP" id="DIP-17236N"/>
<dbReference type="FunCoup" id="Q9VXK0">
    <property type="interactions" value="1395"/>
</dbReference>
<dbReference type="STRING" id="7227.FBpp0074035"/>
<dbReference type="PaxDb" id="7227-FBpp0074034"/>
<dbReference type="DNASU" id="32573"/>
<dbReference type="EnsemblMetazoa" id="FBtr0074257">
    <property type="protein sequence ID" value="FBpp0074034"/>
    <property type="gene ID" value="FBgn0030724"/>
</dbReference>
<dbReference type="EnsemblMetazoa" id="FBtr0074258">
    <property type="protein sequence ID" value="FBpp0074035"/>
    <property type="gene ID" value="FBgn0030724"/>
</dbReference>
<dbReference type="EnsemblMetazoa" id="FBtr0074259">
    <property type="protein sequence ID" value="FBpp0074036"/>
    <property type="gene ID" value="FBgn0030724"/>
</dbReference>
<dbReference type="EnsemblMetazoa" id="FBtr0343595">
    <property type="protein sequence ID" value="FBpp0310192"/>
    <property type="gene ID" value="FBgn0030724"/>
</dbReference>
<dbReference type="GeneID" id="32573"/>
<dbReference type="KEGG" id="dme:Dmel_CG9212"/>
<dbReference type="UCSC" id="CG9212-RA">
    <property type="organism name" value="d. melanogaster"/>
</dbReference>
<dbReference type="AGR" id="FB:FBgn0030724"/>
<dbReference type="CTD" id="32573"/>
<dbReference type="FlyBase" id="FBgn0030724">
    <property type="gene designation" value="Nipsnap"/>
</dbReference>
<dbReference type="VEuPathDB" id="VectorBase:FBgn0030724"/>
<dbReference type="eggNOG" id="KOG2883">
    <property type="taxonomic scope" value="Eukaryota"/>
</dbReference>
<dbReference type="GeneTree" id="ENSGT00950000183018"/>
<dbReference type="HOGENOM" id="CLU_053393_1_0_1"/>
<dbReference type="InParanoid" id="Q9VXK0"/>
<dbReference type="OMA" id="REKSWSV"/>
<dbReference type="OrthoDB" id="10262843at2759"/>
<dbReference type="PhylomeDB" id="Q9VXK0"/>
<dbReference type="Reactome" id="R-DME-9013407">
    <property type="pathway name" value="RHOH GTPase cycle"/>
</dbReference>
<dbReference type="BioGRID-ORCS" id="32573">
    <property type="hits" value="0 hits in 3 CRISPR screens"/>
</dbReference>
<dbReference type="GenomeRNAi" id="32573"/>
<dbReference type="PRO" id="PR:Q9VXK0"/>
<dbReference type="Proteomes" id="UP000000803">
    <property type="component" value="Chromosome X"/>
</dbReference>
<dbReference type="Bgee" id="FBgn0030724">
    <property type="expression patterns" value="Expressed in ensheathing neuropil associated glial cell (Drosophila) in brain and 181 other cell types or tissues"/>
</dbReference>
<dbReference type="ExpressionAtlas" id="Q9VXK0">
    <property type="expression patterns" value="baseline and differential"/>
</dbReference>
<dbReference type="GO" id="GO:0005741">
    <property type="term" value="C:mitochondrial outer membrane"/>
    <property type="evidence" value="ECO:0000250"/>
    <property type="project" value="FlyBase"/>
</dbReference>
<dbReference type="GO" id="GO:0005739">
    <property type="term" value="C:mitochondrion"/>
    <property type="evidence" value="ECO:0000318"/>
    <property type="project" value="GO_Central"/>
</dbReference>
<dbReference type="GO" id="GO:0007005">
    <property type="term" value="P:mitochondrion organization"/>
    <property type="evidence" value="ECO:0000250"/>
    <property type="project" value="FlyBase"/>
</dbReference>
<dbReference type="GO" id="GO:0000423">
    <property type="term" value="P:mitophagy"/>
    <property type="evidence" value="ECO:0007669"/>
    <property type="project" value="UniProtKB-ARBA"/>
</dbReference>
<dbReference type="GO" id="GO:0006119">
    <property type="term" value="P:oxidative phosphorylation"/>
    <property type="evidence" value="ECO:0000250"/>
    <property type="project" value="FlyBase"/>
</dbReference>
<dbReference type="FunFam" id="3.30.70.100:FF:000046">
    <property type="entry name" value="Nipsnap, isoform F"/>
    <property type="match status" value="1"/>
</dbReference>
<dbReference type="FunFam" id="3.30.70.100:FF:000003">
    <property type="entry name" value="Protein NipSnap homolog 2"/>
    <property type="match status" value="1"/>
</dbReference>
<dbReference type="Gene3D" id="3.30.70.100">
    <property type="match status" value="2"/>
</dbReference>
<dbReference type="InterPro" id="IPR011008">
    <property type="entry name" value="Dimeric_a/b-barrel"/>
</dbReference>
<dbReference type="InterPro" id="IPR012577">
    <property type="entry name" value="NIPSNAP"/>
</dbReference>
<dbReference type="InterPro" id="IPR051557">
    <property type="entry name" value="NipSnap_domain"/>
</dbReference>
<dbReference type="PANTHER" id="PTHR21017">
    <property type="entry name" value="NIPSNAP-RELATED"/>
    <property type="match status" value="1"/>
</dbReference>
<dbReference type="PANTHER" id="PTHR21017:SF17">
    <property type="entry name" value="PROTEIN NIPSNAP"/>
    <property type="match status" value="1"/>
</dbReference>
<dbReference type="Pfam" id="PF07978">
    <property type="entry name" value="NIPSNAP"/>
    <property type="match status" value="2"/>
</dbReference>
<dbReference type="SUPFAM" id="SSF54909">
    <property type="entry name" value="Dimeric alpha+beta barrel"/>
    <property type="match status" value="2"/>
</dbReference>
<evidence type="ECO:0000305" key="1"/>
<feature type="chain" id="PRO_0000221151" description="Protein NipSnap">
    <location>
        <begin position="1"/>
        <end position="273"/>
    </location>
</feature>
<feature type="sequence conflict" description="In Ref. 4; CAB56699." evidence="1" ref="4">
    <original>NNW</original>
    <variation>KQT</variation>
    <location>
        <begin position="191"/>
        <end position="193"/>
    </location>
</feature>
<gene>
    <name type="primary">Nipsnap</name>
    <name type="ORF">CG9212</name>
</gene>